<feature type="chain" id="PRO_0000113088" description="Aspartate carbamoyltransferase catalytic subunit">
    <location>
        <begin position="1"/>
        <end position="323"/>
    </location>
</feature>
<feature type="binding site" evidence="1">
    <location>
        <position position="65"/>
    </location>
    <ligand>
        <name>carbamoyl phosphate</name>
        <dbReference type="ChEBI" id="CHEBI:58228"/>
    </ligand>
</feature>
<feature type="binding site" evidence="1">
    <location>
        <position position="66"/>
    </location>
    <ligand>
        <name>carbamoyl phosphate</name>
        <dbReference type="ChEBI" id="CHEBI:58228"/>
    </ligand>
</feature>
<feature type="binding site" evidence="1">
    <location>
        <position position="93"/>
    </location>
    <ligand>
        <name>L-aspartate</name>
        <dbReference type="ChEBI" id="CHEBI:29991"/>
    </ligand>
</feature>
<feature type="binding site" evidence="1">
    <location>
        <position position="115"/>
    </location>
    <ligand>
        <name>carbamoyl phosphate</name>
        <dbReference type="ChEBI" id="CHEBI:58228"/>
    </ligand>
</feature>
<feature type="binding site" evidence="1">
    <location>
        <position position="149"/>
    </location>
    <ligand>
        <name>carbamoyl phosphate</name>
        <dbReference type="ChEBI" id="CHEBI:58228"/>
    </ligand>
</feature>
<feature type="binding site" evidence="1">
    <location>
        <position position="152"/>
    </location>
    <ligand>
        <name>carbamoyl phosphate</name>
        <dbReference type="ChEBI" id="CHEBI:58228"/>
    </ligand>
</feature>
<feature type="binding site" evidence="1">
    <location>
        <position position="182"/>
    </location>
    <ligand>
        <name>L-aspartate</name>
        <dbReference type="ChEBI" id="CHEBI:29991"/>
    </ligand>
</feature>
<feature type="binding site" evidence="1">
    <location>
        <position position="237"/>
    </location>
    <ligand>
        <name>L-aspartate</name>
        <dbReference type="ChEBI" id="CHEBI:29991"/>
    </ligand>
</feature>
<feature type="binding site" evidence="1">
    <location>
        <position position="278"/>
    </location>
    <ligand>
        <name>carbamoyl phosphate</name>
        <dbReference type="ChEBI" id="CHEBI:58228"/>
    </ligand>
</feature>
<feature type="binding site" evidence="1">
    <location>
        <position position="279"/>
    </location>
    <ligand>
        <name>carbamoyl phosphate</name>
        <dbReference type="ChEBI" id="CHEBI:58228"/>
    </ligand>
</feature>
<dbReference type="EC" id="2.1.3.2" evidence="1"/>
<dbReference type="EMBL" id="CR555306">
    <property type="protein sequence ID" value="CAI07077.1"/>
    <property type="molecule type" value="Genomic_DNA"/>
</dbReference>
<dbReference type="RefSeq" id="WP_011236802.1">
    <property type="nucleotide sequence ID" value="NC_006513.1"/>
</dbReference>
<dbReference type="SMR" id="Q5P6I4"/>
<dbReference type="STRING" id="76114.ebA1759"/>
<dbReference type="KEGG" id="eba:ebA1759"/>
<dbReference type="eggNOG" id="COG0540">
    <property type="taxonomic scope" value="Bacteria"/>
</dbReference>
<dbReference type="HOGENOM" id="CLU_043846_2_0_4"/>
<dbReference type="OrthoDB" id="9774690at2"/>
<dbReference type="UniPathway" id="UPA00070">
    <property type="reaction ID" value="UER00116"/>
</dbReference>
<dbReference type="Proteomes" id="UP000006552">
    <property type="component" value="Chromosome"/>
</dbReference>
<dbReference type="GO" id="GO:0005829">
    <property type="term" value="C:cytosol"/>
    <property type="evidence" value="ECO:0007669"/>
    <property type="project" value="TreeGrafter"/>
</dbReference>
<dbReference type="GO" id="GO:0016597">
    <property type="term" value="F:amino acid binding"/>
    <property type="evidence" value="ECO:0007669"/>
    <property type="project" value="InterPro"/>
</dbReference>
<dbReference type="GO" id="GO:0004070">
    <property type="term" value="F:aspartate carbamoyltransferase activity"/>
    <property type="evidence" value="ECO:0007669"/>
    <property type="project" value="UniProtKB-UniRule"/>
</dbReference>
<dbReference type="GO" id="GO:0006207">
    <property type="term" value="P:'de novo' pyrimidine nucleobase biosynthetic process"/>
    <property type="evidence" value="ECO:0007669"/>
    <property type="project" value="InterPro"/>
</dbReference>
<dbReference type="GO" id="GO:0044205">
    <property type="term" value="P:'de novo' UMP biosynthetic process"/>
    <property type="evidence" value="ECO:0007669"/>
    <property type="project" value="UniProtKB-UniRule"/>
</dbReference>
<dbReference type="GO" id="GO:0006520">
    <property type="term" value="P:amino acid metabolic process"/>
    <property type="evidence" value="ECO:0007669"/>
    <property type="project" value="InterPro"/>
</dbReference>
<dbReference type="FunFam" id="3.40.50.1370:FF:000007">
    <property type="entry name" value="Aspartate carbamoyltransferase"/>
    <property type="match status" value="1"/>
</dbReference>
<dbReference type="Gene3D" id="3.40.50.1370">
    <property type="entry name" value="Aspartate/ornithine carbamoyltransferase"/>
    <property type="match status" value="2"/>
</dbReference>
<dbReference type="HAMAP" id="MF_00001">
    <property type="entry name" value="Asp_carb_tr"/>
    <property type="match status" value="1"/>
</dbReference>
<dbReference type="InterPro" id="IPR006132">
    <property type="entry name" value="Asp/Orn_carbamoyltranf_P-bd"/>
</dbReference>
<dbReference type="InterPro" id="IPR006130">
    <property type="entry name" value="Asp/Orn_carbamoylTrfase"/>
</dbReference>
<dbReference type="InterPro" id="IPR036901">
    <property type="entry name" value="Asp/Orn_carbamoylTrfase_sf"/>
</dbReference>
<dbReference type="InterPro" id="IPR002082">
    <property type="entry name" value="Asp_carbamoyltransf"/>
</dbReference>
<dbReference type="InterPro" id="IPR006131">
    <property type="entry name" value="Asp_carbamoyltransf_Asp/Orn-bd"/>
</dbReference>
<dbReference type="NCBIfam" id="TIGR00670">
    <property type="entry name" value="asp_carb_tr"/>
    <property type="match status" value="1"/>
</dbReference>
<dbReference type="NCBIfam" id="NF002032">
    <property type="entry name" value="PRK00856.1"/>
    <property type="match status" value="1"/>
</dbReference>
<dbReference type="PANTHER" id="PTHR45753:SF6">
    <property type="entry name" value="ASPARTATE CARBAMOYLTRANSFERASE"/>
    <property type="match status" value="1"/>
</dbReference>
<dbReference type="PANTHER" id="PTHR45753">
    <property type="entry name" value="ORNITHINE CARBAMOYLTRANSFERASE, MITOCHONDRIAL"/>
    <property type="match status" value="1"/>
</dbReference>
<dbReference type="Pfam" id="PF00185">
    <property type="entry name" value="OTCace"/>
    <property type="match status" value="1"/>
</dbReference>
<dbReference type="Pfam" id="PF02729">
    <property type="entry name" value="OTCace_N"/>
    <property type="match status" value="1"/>
</dbReference>
<dbReference type="PRINTS" id="PR00100">
    <property type="entry name" value="AOTCASE"/>
</dbReference>
<dbReference type="PRINTS" id="PR00101">
    <property type="entry name" value="ATCASE"/>
</dbReference>
<dbReference type="SUPFAM" id="SSF53671">
    <property type="entry name" value="Aspartate/ornithine carbamoyltransferase"/>
    <property type="match status" value="1"/>
</dbReference>
<dbReference type="PROSITE" id="PS00097">
    <property type="entry name" value="CARBAMOYLTRANSFERASE"/>
    <property type="match status" value="1"/>
</dbReference>
<keyword id="KW-0665">Pyrimidine biosynthesis</keyword>
<keyword id="KW-1185">Reference proteome</keyword>
<keyword id="KW-0808">Transferase</keyword>
<sequence>MRNPQLNKHGELQHLLTIDGLPRSILTAILDTAAPFTEVAEREVKKLPLLRGKSIFNLFFENSTRTRTTFEIAAKRLSADVVNLNVSTSSAAKGESLLDTVDNLSAMQADMFVVRHAASGAPFLIAQHLFATGRDHIHVVNAGDGRHAHPTQGLLDMYTIRHFKRDFTNLTIAIVGDVLHSRVARSQIGALTTLGVPEVRVIGPKTLLPTDVERLGVRVFHDIREGLRGVDVVMMLRLQNERMNGALLPTPQEFYKVWGLTAEKLALAKPDAIVMHPGPMNRGVEIDSSVADGAQAVILPQVTFGIAVRMAVMSMLAGQQGSK</sequence>
<comment type="function">
    <text evidence="1">Catalyzes the condensation of carbamoyl phosphate and aspartate to form carbamoyl aspartate and inorganic phosphate, the committed step in the de novo pyrimidine nucleotide biosynthesis pathway.</text>
</comment>
<comment type="catalytic activity">
    <reaction evidence="1">
        <text>carbamoyl phosphate + L-aspartate = N-carbamoyl-L-aspartate + phosphate + H(+)</text>
        <dbReference type="Rhea" id="RHEA:20013"/>
        <dbReference type="ChEBI" id="CHEBI:15378"/>
        <dbReference type="ChEBI" id="CHEBI:29991"/>
        <dbReference type="ChEBI" id="CHEBI:32814"/>
        <dbReference type="ChEBI" id="CHEBI:43474"/>
        <dbReference type="ChEBI" id="CHEBI:58228"/>
        <dbReference type="EC" id="2.1.3.2"/>
    </reaction>
</comment>
<comment type="pathway">
    <text evidence="1">Pyrimidine metabolism; UMP biosynthesis via de novo pathway; (S)-dihydroorotate from bicarbonate: step 2/3.</text>
</comment>
<comment type="subunit">
    <text evidence="1">Heterododecamer (2C3:3R2) of six catalytic PyrB chains organized as two trimers (C3), and six regulatory PyrI chains organized as three dimers (R2).</text>
</comment>
<comment type="similarity">
    <text evidence="1">Belongs to the aspartate/ornithine carbamoyltransferase superfamily. ATCase family.</text>
</comment>
<accession>Q5P6I4</accession>
<protein>
    <recommendedName>
        <fullName evidence="1">Aspartate carbamoyltransferase catalytic subunit</fullName>
        <ecNumber evidence="1">2.1.3.2</ecNumber>
    </recommendedName>
    <alternativeName>
        <fullName evidence="1">Aspartate transcarbamylase</fullName>
        <shortName evidence="1">ATCase</shortName>
    </alternativeName>
</protein>
<organism>
    <name type="scientific">Aromatoleum aromaticum (strain DSM 19018 / LMG 30748 / EbN1)</name>
    <name type="common">Azoarcus sp. (strain EbN1)</name>
    <dbReference type="NCBI Taxonomy" id="76114"/>
    <lineage>
        <taxon>Bacteria</taxon>
        <taxon>Pseudomonadati</taxon>
        <taxon>Pseudomonadota</taxon>
        <taxon>Betaproteobacteria</taxon>
        <taxon>Rhodocyclales</taxon>
        <taxon>Rhodocyclaceae</taxon>
        <taxon>Aromatoleum</taxon>
    </lineage>
</organism>
<name>PYRB_AROAE</name>
<reference key="1">
    <citation type="journal article" date="2005" name="Arch. Microbiol.">
        <title>The genome sequence of an anaerobic aromatic-degrading denitrifying bacterium, strain EbN1.</title>
        <authorList>
            <person name="Rabus R."/>
            <person name="Kube M."/>
            <person name="Heider J."/>
            <person name="Beck A."/>
            <person name="Heitmann K."/>
            <person name="Widdel F."/>
            <person name="Reinhardt R."/>
        </authorList>
    </citation>
    <scope>NUCLEOTIDE SEQUENCE [LARGE SCALE GENOMIC DNA]</scope>
    <source>
        <strain>DSM 19018 / LMG 30748 / EbN1</strain>
    </source>
</reference>
<proteinExistence type="inferred from homology"/>
<evidence type="ECO:0000255" key="1">
    <source>
        <dbReference type="HAMAP-Rule" id="MF_00001"/>
    </source>
</evidence>
<gene>
    <name evidence="1" type="primary">pyrB</name>
    <name type="ordered locus">AZOSEA09520</name>
    <name type="ORF">ebA1759</name>
</gene>